<comment type="function">
    <text evidence="1">NDH shuttles electrons from NAD(P)H:plastoquinone, via FMN and iron-sulfur (Fe-S) centers, to quinones in the photosynthetic chain and possibly in a chloroplast respiratory chain. The immediate electron acceptor for the enzyme in this species is believed to be plastoquinone. Couples the redox reaction to proton translocation, and thus conserves the redox energy in a proton gradient.</text>
</comment>
<comment type="catalytic activity">
    <reaction evidence="1">
        <text>a plastoquinone + NADH + (n+1) H(+)(in) = a plastoquinol + NAD(+) + n H(+)(out)</text>
        <dbReference type="Rhea" id="RHEA:42608"/>
        <dbReference type="Rhea" id="RHEA-COMP:9561"/>
        <dbReference type="Rhea" id="RHEA-COMP:9562"/>
        <dbReference type="ChEBI" id="CHEBI:15378"/>
        <dbReference type="ChEBI" id="CHEBI:17757"/>
        <dbReference type="ChEBI" id="CHEBI:57540"/>
        <dbReference type="ChEBI" id="CHEBI:57945"/>
        <dbReference type="ChEBI" id="CHEBI:62192"/>
    </reaction>
</comment>
<comment type="catalytic activity">
    <reaction evidence="1">
        <text>a plastoquinone + NADPH + (n+1) H(+)(in) = a plastoquinol + NADP(+) + n H(+)(out)</text>
        <dbReference type="Rhea" id="RHEA:42612"/>
        <dbReference type="Rhea" id="RHEA-COMP:9561"/>
        <dbReference type="Rhea" id="RHEA-COMP:9562"/>
        <dbReference type="ChEBI" id="CHEBI:15378"/>
        <dbReference type="ChEBI" id="CHEBI:17757"/>
        <dbReference type="ChEBI" id="CHEBI:57783"/>
        <dbReference type="ChEBI" id="CHEBI:58349"/>
        <dbReference type="ChEBI" id="CHEBI:62192"/>
    </reaction>
</comment>
<comment type="cofactor">
    <cofactor evidence="1">
        <name>[4Fe-4S] cluster</name>
        <dbReference type="ChEBI" id="CHEBI:49883"/>
    </cofactor>
    <text evidence="1">Binds 2 [4Fe-4S] clusters per subunit.</text>
</comment>
<comment type="subunit">
    <text evidence="1">NDH is composed of at least 16 different subunits, 5 of which are encoded in the nucleus.</text>
</comment>
<comment type="subcellular location">
    <subcellularLocation>
        <location evidence="1">Plastid</location>
        <location evidence="1">Chloroplast thylakoid membrane</location>
        <topology evidence="1">Peripheral membrane protein</topology>
    </subcellularLocation>
</comment>
<comment type="similarity">
    <text evidence="1">Belongs to the complex I 23 kDa subunit family.</text>
</comment>
<reference key="1">
    <citation type="journal article" date="2005" name="Mol. Biol. Evol.">
        <title>Analysis of Acorus calamus chloroplast genome and its phylogenetic implications.</title>
        <authorList>
            <person name="Goremykin V.V."/>
            <person name="Holland B."/>
            <person name="Hirsch-Ernst K.I."/>
            <person name="Hellwig F.H."/>
        </authorList>
    </citation>
    <scope>NUCLEOTIDE SEQUENCE [LARGE SCALE GENOMIC DNA]</scope>
</reference>
<protein>
    <recommendedName>
        <fullName evidence="1">NAD(P)H-quinone oxidoreductase subunit I, chloroplastic</fullName>
        <ecNumber evidence="1">7.1.1.-</ecNumber>
    </recommendedName>
    <alternativeName>
        <fullName evidence="1">NAD(P)H dehydrogenase subunit I</fullName>
        <shortName evidence="1">NDH subunit I</shortName>
    </alternativeName>
    <alternativeName>
        <fullName evidence="1">NADH-plastoquinone oxidoreductase subunit I</fullName>
    </alternativeName>
</protein>
<dbReference type="EC" id="7.1.1.-" evidence="1"/>
<dbReference type="EMBL" id="AJ879453">
    <property type="protein sequence ID" value="CAI53848.1"/>
    <property type="molecule type" value="Genomic_DNA"/>
</dbReference>
<dbReference type="RefSeq" id="YP_319817.1">
    <property type="nucleotide sequence ID" value="NC_007407.1"/>
</dbReference>
<dbReference type="SMR" id="Q3V4Y0"/>
<dbReference type="GeneID" id="3677486"/>
<dbReference type="GO" id="GO:0009535">
    <property type="term" value="C:chloroplast thylakoid membrane"/>
    <property type="evidence" value="ECO:0007669"/>
    <property type="project" value="UniProtKB-SubCell"/>
</dbReference>
<dbReference type="GO" id="GO:0051539">
    <property type="term" value="F:4 iron, 4 sulfur cluster binding"/>
    <property type="evidence" value="ECO:0007669"/>
    <property type="project" value="UniProtKB-KW"/>
</dbReference>
<dbReference type="GO" id="GO:0005506">
    <property type="term" value="F:iron ion binding"/>
    <property type="evidence" value="ECO:0007669"/>
    <property type="project" value="UniProtKB-UniRule"/>
</dbReference>
<dbReference type="GO" id="GO:0008137">
    <property type="term" value="F:NADH dehydrogenase (ubiquinone) activity"/>
    <property type="evidence" value="ECO:0007669"/>
    <property type="project" value="InterPro"/>
</dbReference>
<dbReference type="GO" id="GO:0048038">
    <property type="term" value="F:quinone binding"/>
    <property type="evidence" value="ECO:0007669"/>
    <property type="project" value="UniProtKB-KW"/>
</dbReference>
<dbReference type="GO" id="GO:0019684">
    <property type="term" value="P:photosynthesis, light reaction"/>
    <property type="evidence" value="ECO:0007669"/>
    <property type="project" value="UniProtKB-UniRule"/>
</dbReference>
<dbReference type="FunFam" id="3.30.70.3270:FF:000006">
    <property type="entry name" value="NAD(P)H-quinone oxidoreductase subunit I, chloroplastic"/>
    <property type="match status" value="1"/>
</dbReference>
<dbReference type="Gene3D" id="3.30.70.3270">
    <property type="match status" value="1"/>
</dbReference>
<dbReference type="HAMAP" id="MF_01351">
    <property type="entry name" value="NDH1_NuoI"/>
    <property type="match status" value="1"/>
</dbReference>
<dbReference type="InterPro" id="IPR017896">
    <property type="entry name" value="4Fe4S_Fe-S-bd"/>
</dbReference>
<dbReference type="InterPro" id="IPR017900">
    <property type="entry name" value="4Fe4S_Fe_S_CS"/>
</dbReference>
<dbReference type="InterPro" id="IPR010226">
    <property type="entry name" value="NADH_quinone_OxRdtase_chainI"/>
</dbReference>
<dbReference type="InterPro" id="IPR004497">
    <property type="entry name" value="NDHI"/>
</dbReference>
<dbReference type="NCBIfam" id="TIGR00403">
    <property type="entry name" value="ndhI"/>
    <property type="match status" value="1"/>
</dbReference>
<dbReference type="NCBIfam" id="TIGR01971">
    <property type="entry name" value="NuoI"/>
    <property type="match status" value="1"/>
</dbReference>
<dbReference type="NCBIfam" id="NF004537">
    <property type="entry name" value="PRK05888.1-3"/>
    <property type="match status" value="1"/>
</dbReference>
<dbReference type="PANTHER" id="PTHR47275">
    <property type="entry name" value="NAD(P)H-QUINONE OXIDOREDUCTASE SUBUNIT I, CHLOROPLASTIC"/>
    <property type="match status" value="1"/>
</dbReference>
<dbReference type="PANTHER" id="PTHR47275:SF1">
    <property type="entry name" value="NAD(P)H-QUINONE OXIDOREDUCTASE SUBUNIT I, CHLOROPLASTIC"/>
    <property type="match status" value="1"/>
</dbReference>
<dbReference type="Pfam" id="PF13237">
    <property type="entry name" value="Fer4_10"/>
    <property type="match status" value="1"/>
</dbReference>
<dbReference type="SUPFAM" id="SSF54862">
    <property type="entry name" value="4Fe-4S ferredoxins"/>
    <property type="match status" value="1"/>
</dbReference>
<dbReference type="PROSITE" id="PS00198">
    <property type="entry name" value="4FE4S_FER_1"/>
    <property type="match status" value="2"/>
</dbReference>
<dbReference type="PROSITE" id="PS51379">
    <property type="entry name" value="4FE4S_FER_2"/>
    <property type="match status" value="2"/>
</dbReference>
<accession>Q3V4Y0</accession>
<organism>
    <name type="scientific">Acorus calamus</name>
    <name type="common">Sweet flag</name>
    <dbReference type="NCBI Taxonomy" id="4465"/>
    <lineage>
        <taxon>Eukaryota</taxon>
        <taxon>Viridiplantae</taxon>
        <taxon>Streptophyta</taxon>
        <taxon>Embryophyta</taxon>
        <taxon>Tracheophyta</taxon>
        <taxon>Spermatophyta</taxon>
        <taxon>Magnoliopsida</taxon>
        <taxon>Liliopsida</taxon>
        <taxon>Acoraceae</taxon>
        <taxon>Acorus</taxon>
    </lineage>
</organism>
<feature type="chain" id="PRO_0000245649" description="NAD(P)H-quinone oxidoreductase subunit I, chloroplastic">
    <location>
        <begin position="1"/>
        <end position="179"/>
    </location>
</feature>
<feature type="domain" description="4Fe-4S ferredoxin-type 1" evidence="1">
    <location>
        <begin position="55"/>
        <end position="84"/>
    </location>
</feature>
<feature type="domain" description="4Fe-4S ferredoxin-type 2" evidence="1">
    <location>
        <begin position="95"/>
        <end position="124"/>
    </location>
</feature>
<feature type="binding site" evidence="1">
    <location>
        <position position="64"/>
    </location>
    <ligand>
        <name>[4Fe-4S] cluster</name>
        <dbReference type="ChEBI" id="CHEBI:49883"/>
        <label>1</label>
    </ligand>
</feature>
<feature type="binding site" evidence="1">
    <location>
        <position position="67"/>
    </location>
    <ligand>
        <name>[4Fe-4S] cluster</name>
        <dbReference type="ChEBI" id="CHEBI:49883"/>
        <label>1</label>
    </ligand>
</feature>
<feature type="binding site" evidence="1">
    <location>
        <position position="70"/>
    </location>
    <ligand>
        <name>[4Fe-4S] cluster</name>
        <dbReference type="ChEBI" id="CHEBI:49883"/>
        <label>1</label>
    </ligand>
</feature>
<feature type="binding site" evidence="1">
    <location>
        <position position="74"/>
    </location>
    <ligand>
        <name>[4Fe-4S] cluster</name>
        <dbReference type="ChEBI" id="CHEBI:49883"/>
        <label>2</label>
    </ligand>
</feature>
<feature type="binding site" evidence="1">
    <location>
        <position position="104"/>
    </location>
    <ligand>
        <name>[4Fe-4S] cluster</name>
        <dbReference type="ChEBI" id="CHEBI:49883"/>
        <label>2</label>
    </ligand>
</feature>
<feature type="binding site" evidence="1">
    <location>
        <position position="107"/>
    </location>
    <ligand>
        <name>[4Fe-4S] cluster</name>
        <dbReference type="ChEBI" id="CHEBI:49883"/>
        <label>2</label>
    </ligand>
</feature>
<feature type="binding site" evidence="1">
    <location>
        <position position="110"/>
    </location>
    <ligand>
        <name>[4Fe-4S] cluster</name>
        <dbReference type="ChEBI" id="CHEBI:49883"/>
        <label>2</label>
    </ligand>
</feature>
<feature type="binding site" evidence="1">
    <location>
        <position position="114"/>
    </location>
    <ligand>
        <name>[4Fe-4S] cluster</name>
        <dbReference type="ChEBI" id="CHEBI:49883"/>
        <label>1</label>
    </ligand>
</feature>
<evidence type="ECO:0000255" key="1">
    <source>
        <dbReference type="HAMAP-Rule" id="MF_01351"/>
    </source>
</evidence>
<keyword id="KW-0004">4Fe-4S</keyword>
<keyword id="KW-0150">Chloroplast</keyword>
<keyword id="KW-0408">Iron</keyword>
<keyword id="KW-0411">Iron-sulfur</keyword>
<keyword id="KW-0472">Membrane</keyword>
<keyword id="KW-0479">Metal-binding</keyword>
<keyword id="KW-0520">NAD</keyword>
<keyword id="KW-0521">NADP</keyword>
<keyword id="KW-0934">Plastid</keyword>
<keyword id="KW-0618">Plastoquinone</keyword>
<keyword id="KW-0874">Quinone</keyword>
<keyword id="KW-0677">Repeat</keyword>
<keyword id="KW-0793">Thylakoid</keyword>
<keyword id="KW-1278">Translocase</keyword>
<name>NDHI_ACOCL</name>
<proteinExistence type="inferred from homology"/>
<geneLocation type="chloroplast"/>
<sequence length="179" mass="20732">MFPMVTGFMNYGQQTVRAARYIGQSFMITLSHANRLPVTIQYPYEKLITSERFRGRIHFEFDKCIACEVCVRVCPIDLPVVDWRLDTDVRKKQLLNYSIDFGVCIFCGNCVEYCPTNCLSMTEEYELSTYDRHELNYNQIALGRLPMSVIEDYTIRTTTNLTPIKIAKNKPLGSRTITN</sequence>
<gene>
    <name evidence="1" type="primary">ndhI</name>
</gene>